<sequence>MDRAVSQVALENDEREAKNTWRLIFRIAILFLTVVTLAISVASLLYSMGASTPSDLVGIPTRISRAEEKITSTLGSNQDVVDRIYKQVALESPLALLNTETTIMNAITSLSYQINGAANNSGWGAPIHDPDYIGGIGKELIVDDASDVTSFYPSAFQEHLNFIPAPTTGSGCTRIPSFDMSATHYCYTHNVILSGCRDHSHSYQYLALGVLRTSATGRVFFSTLRSINLDDTQNRKSCSVSATPLGCDMLCSKATETEEEDYNSAVPTRMVHGRLGFDGQYHEKDLDVTTLFGDWVANYPGVGGGSFIDSRVWFSVYGGLKPNSPSDTVQEGKYVIYKRYNDTCPDEQDYQIRMAKSSYKPGRFGGKRIQQAILSIKVSTSLGEDPVLTVPPNTVTLMGAEGRILTVGTSHFLYQRGSSYFSPALLYPMTVSNKTATLHSPYTFNAFTRPGSIPCQASARCPNSCVTGVYTDPYPLIFYRNHTLRGVFGTMLDGEQARLNPASAVFDSTSRSRITRVSSSSIKAAYTTSTCFKVVKTNKTYCLSIAEISNTLFGEFRIVPLLVEILKDDGVREARSG</sequence>
<organismHost>
    <name type="scientific">Gallus gallus</name>
    <name type="common">Chicken</name>
    <dbReference type="NCBI Taxonomy" id="9031"/>
</organismHost>
<reference key="1">
    <citation type="submission" date="2000-09" db="EMBL/GenBank/DDBJ databases">
        <title>Complete sequence for the B1 strain of Newcastle disease virus.</title>
        <authorList>
            <person name="Sellers H.S."/>
            <person name="Seal B.S."/>
        </authorList>
    </citation>
    <scope>NUCLEOTIDE SEQUENCE [GENOMIC RNA]</scope>
</reference>
<reference key="2">
    <citation type="journal article" date="2002" name="J. Virol.">
        <title>Newcastle disease virus HN protein alters the conformation of the F protein at cell surfaces.</title>
        <authorList>
            <person name="McGinnes L.W."/>
            <person name="Gravel K."/>
            <person name="Morrison T.G."/>
        </authorList>
    </citation>
    <scope>FUNCTION</scope>
</reference>
<reference key="3">
    <citation type="journal article" date="2002" name="J. Virol.">
        <title>Role of the hemagglutinin-neuraminidase protein in the mechanism of paramyxovirus-cell membrane fusion.</title>
        <authorList>
            <person name="Takimoto T."/>
            <person name="Taylor G.L."/>
            <person name="Connaris H.C."/>
            <person name="Crennell S.J."/>
            <person name="Portner A."/>
        </authorList>
    </citation>
    <scope>FUNCTION</scope>
    <scope>SUBUNIT</scope>
    <scope>MUTAGENESIS OF GLU-158; LEU-160; PHE-220; LEU-224; LYS-536 AND ARG-557</scope>
</reference>
<reference key="4">
    <citation type="journal article" date="2003" name="J. Virol.">
        <title>Interacting domains of the HN and F proteins of newcastle disease virus.</title>
        <authorList>
            <person name="Gravel K.A."/>
            <person name="Morrison T.G."/>
        </authorList>
    </citation>
    <scope>FUNCTION</scope>
    <scope>INTERACTION WITH F</scope>
    <scope>MUTAGENESIS OF ILE-133 AND LEU-140</scope>
</reference>
<reference key="5">
    <citation type="journal article" date="2004" name="J. Virol.">
        <title>Second sialic acid binding site in Newcastle disease virus hemagglutinin-neuraminidase: implications for fusion.</title>
        <authorList>
            <person name="Zaitsev V."/>
            <person name="von Itzstein M."/>
            <person name="Groves D."/>
            <person name="Kiefel M."/>
            <person name="Takimoto T."/>
            <person name="Portner A."/>
            <person name="Taylor G."/>
        </authorList>
    </citation>
    <scope>FUNCTION</scope>
    <scope>SUBUNIT</scope>
</reference>
<reference key="6">
    <citation type="journal article" date="2009" name="J. Virol.">
        <title>A Y526Q mutation in the Newcastle disease virus HN protein reduces its functional activities and attenuates virus replication and pathogenicity.</title>
        <authorList>
            <person name="Khattar S.K."/>
            <person name="Yan Y."/>
            <person name="Panda A."/>
            <person name="Collins P.L."/>
            <person name="Samal S.K."/>
        </authorList>
    </citation>
    <scope>FUNCTION</scope>
    <scope>MUTAGENESIS OF TYR-526</scope>
</reference>
<reference key="7">
    <citation type="journal article" date="2013" name="J. Virol.">
        <title>A mutation in the stalk of the newcastle disease virus hemagglutinin-neuraminidase (HN) protein prevents triggering of the F protein despite allowing efficient HN-F complex formation.</title>
        <authorList>
            <person name="Mirza A.M."/>
            <person name="Iorio R.M."/>
        </authorList>
    </citation>
    <scope>FUNCTION</scope>
    <scope>INTERACTION WITH F</scope>
    <scope>MUTAGENESIS OF ARG-83 AND LEU-97</scope>
</reference>
<reference key="8">
    <citation type="journal article" date="2017" name="Glycoconj. J.">
        <title>Site-specific glycosylation of the Newcastle disease virus haemagglutinin-neuraminidase.</title>
        <authorList>
            <person name="Pegg C.L."/>
            <person name="Hoogland C."/>
            <person name="Gorman J.J."/>
        </authorList>
    </citation>
    <scope>GLYCOSYLATION AT ASN-341; ASN-433 AND ASN-481</scope>
</reference>
<reference key="9">
    <citation type="journal article" date="2017" name="J. Biol. Chem.">
        <title>Chicken galectin-1B inhibits Newcastle disease virus adsorption and replication through binding to hemagglutinin-neuraminidase (HN) glycoprotein.</title>
        <authorList>
            <person name="Sun J."/>
            <person name="Han Z."/>
            <person name="Qi T."/>
            <person name="Zhao R."/>
            <person name="Liu S."/>
        </authorList>
    </citation>
    <scope>INTERACTION WITH HOST GALECTIN-1B/CG-1B</scope>
    <scope>SUBCELLULAR LOCATION</scope>
</reference>
<proteinExistence type="evidence at protein level"/>
<organism>
    <name type="scientific">Newcastle disease virus (strain Chicken/United States/B1/48)</name>
    <name type="common">NDV</name>
    <dbReference type="NCBI Taxonomy" id="652953"/>
    <lineage>
        <taxon>Viruses</taxon>
        <taxon>Riboviria</taxon>
        <taxon>Orthornavirae</taxon>
        <taxon>Negarnaviricota</taxon>
        <taxon>Haploviricotina</taxon>
        <taxon>Monjiviricetes</taxon>
        <taxon>Mononegavirales</taxon>
        <taxon>Paramyxoviridae</taxon>
        <taxon>Avulavirinae</taxon>
        <taxon>Orthoavulavirus</taxon>
        <taxon>Orthoavulavirus javaense</taxon>
        <taxon>Avian paramyxovirus 1</taxon>
    </lineage>
</organism>
<comment type="function">
    <text evidence="3 4 5 6 7 8">Mediates the viral entry into the host cell together with fusion/F protein. Attaches the virus to sialic acid-containing cell receptors and thereby initiates infection. Binding of HN protein to the receptor induces a conformational change that allows the F protein to trigger virion/cell membranes fusion.</text>
</comment>
<comment type="function">
    <text evidence="7">Neuraminidase activity ensures the efficient spread of the virus by dissociating the mature virions from the neuraminic acid containing glycoproteins.</text>
</comment>
<comment type="catalytic activity">
    <reaction evidence="1">
        <text>Hydrolysis of alpha-(2-&gt;3)-, alpha-(2-&gt;6)-, alpha-(2-&gt;8)- glycosidic linkages of terminal sialic acid residues in oligosaccharides, glycoproteins, glycolipids, colominic acid and synthetic substrates.</text>
        <dbReference type="EC" id="3.2.1.18"/>
    </reaction>
</comment>
<comment type="subunit">
    <text evidence="4 5 6 8 10">Homotetramer; composed of disulfide-linked homodimers (PubMed:12438628, PubMed:15016893). Interacts with F protein trimer (PubMed:14512552, PubMed:23740987). Interacts with host CG-1B; this interaction inhibits viral adsorption and replication rather than internalization (PubMed:28978647).</text>
</comment>
<comment type="subcellular location">
    <subcellularLocation>
        <location evidence="10">Virion membrane</location>
        <topology evidence="11">Single-pass type II membrane protein</topology>
    </subcellularLocation>
    <subcellularLocation>
        <location evidence="10">Host cell membrane</location>
        <topology evidence="11">Single-pass type II membrane protein</topology>
    </subcellularLocation>
</comment>
<comment type="domain">
    <text evidence="1">The C-terminus (head domain) is involved in binding the cellular receptor.</text>
</comment>
<comment type="similarity">
    <text evidence="11">Belongs to the paramyxoviruses hemagglutinin-neuraminidase family.</text>
</comment>
<protein>
    <recommendedName>
        <fullName>Hemagglutinin-neuraminidase</fullName>
        <ecNumber evidence="1">3.2.1.18</ecNumber>
    </recommendedName>
</protein>
<feature type="chain" id="PRO_0000390622" description="Hemagglutinin-neuraminidase">
    <location>
        <begin position="1"/>
        <end position="577"/>
    </location>
</feature>
<feature type="topological domain" description="Intravirion" evidence="2">
    <location>
        <begin position="1"/>
        <end position="26"/>
    </location>
</feature>
<feature type="transmembrane region" description="Helical" evidence="2">
    <location>
        <begin position="27"/>
        <end position="47"/>
    </location>
</feature>
<feature type="topological domain" description="Virion surface" evidence="2">
    <location>
        <begin position="48"/>
        <end position="577"/>
    </location>
</feature>
<feature type="region of interest" description="Important for interaction with fusion/F protein" evidence="5">
    <location>
        <begin position="124"/>
        <end position="152"/>
    </location>
</feature>
<feature type="glycosylation site" description="N-linked (GlcNAc...) asparagine; by host" evidence="9">
    <location>
        <position position="341"/>
    </location>
</feature>
<feature type="glycosylation site" description="N-linked (GlcNAc...) asparagine; by host" evidence="9">
    <location>
        <position position="433"/>
    </location>
</feature>
<feature type="glycosylation site" description="N-linked (GlcNAc...) asparagine; by host" evidence="9">
    <location>
        <position position="481"/>
    </location>
</feature>
<feature type="glycosylation site" description="N-linked (GlcNAc...) asparagine; by host" evidence="2">
    <location>
        <position position="538"/>
    </location>
</feature>
<feature type="mutagenesis site" description="About 95% loss of the fusion promotion activities." evidence="8">
    <original>R</original>
    <variation>T</variation>
    <location>
        <position position="83"/>
    </location>
</feature>
<feature type="mutagenesis site" description="About 95% loss of the fusion promotion activities." evidence="8">
    <original>L</original>
    <variation>T</variation>
    <location>
        <position position="97"/>
    </location>
</feature>
<feature type="mutagenesis site" description="About 80% loss of the fusion promotion activities." evidence="5">
    <original>I</original>
    <variation>A</variation>
    <location>
        <position position="133"/>
    </location>
</feature>
<feature type="mutagenesis site" description="About 80% loss of the fusion promotion activities." evidence="5">
    <original>L</original>
    <variation>A</variation>
    <location>
        <position position="140"/>
    </location>
</feature>
<feature type="mutagenesis site" description="About 98% loss of the fusion promotion activities." evidence="4">
    <original>E</original>
    <variation>A</variation>
    <location>
        <position position="158"/>
    </location>
</feature>
<feature type="mutagenesis site" description="About 97% loss of the fusion promotion activities." evidence="4">
    <original>L</original>
    <variation>A</variation>
    <location>
        <position position="160"/>
    </location>
</feature>
<feature type="mutagenesis site" description="About 97% loss of the fusion promotion activities." evidence="4">
    <original>F</original>
    <variation>A</variation>
    <location>
        <position position="220"/>
    </location>
</feature>
<feature type="mutagenesis site" description="About 97% loss of the fusion promotion activities." evidence="4">
    <original>L</original>
    <variation>A</variation>
    <location>
        <position position="224"/>
    </location>
</feature>
<feature type="mutagenesis site" description="About 30% to 50% loss of the fusion promotion activities." evidence="4">
    <original>Y</original>
    <variation>Q</variation>
    <location>
        <position position="526"/>
    </location>
</feature>
<feature type="mutagenesis site" description="About 96% loss of the fusion promotion activities." evidence="4">
    <original>K</original>
    <variation>A</variation>
    <location>
        <position position="536"/>
    </location>
</feature>
<feature type="mutagenesis site" description="About 99% loss of the fusion promotion activities." evidence="4">
    <original>R</original>
    <variation>A</variation>
    <location>
        <position position="557"/>
    </location>
</feature>
<accession>Q91UL0</accession>
<name>HN_NDVB1</name>
<keyword id="KW-0325">Glycoprotein</keyword>
<keyword id="KW-0348">Hemagglutinin</keyword>
<keyword id="KW-1032">Host cell membrane</keyword>
<keyword id="KW-1043">Host membrane</keyword>
<keyword id="KW-0945">Host-virus interaction</keyword>
<keyword id="KW-0378">Hydrolase</keyword>
<keyword id="KW-0472">Membrane</keyword>
<keyword id="KW-1185">Reference proteome</keyword>
<keyword id="KW-0735">Signal-anchor</keyword>
<keyword id="KW-0812">Transmembrane</keyword>
<keyword id="KW-1133">Transmembrane helix</keyword>
<keyword id="KW-1161">Viral attachment to host cell</keyword>
<keyword id="KW-0261">Viral envelope protein</keyword>
<keyword id="KW-0946">Virion</keyword>
<keyword id="KW-1160">Virus entry into host cell</keyword>
<evidence type="ECO:0000250" key="1">
    <source>
        <dbReference type="UniProtKB" id="Q9WAF5"/>
    </source>
</evidence>
<evidence type="ECO:0000255" key="2"/>
<evidence type="ECO:0000269" key="3">
    <source>
    </source>
</evidence>
<evidence type="ECO:0000269" key="4">
    <source>
    </source>
</evidence>
<evidence type="ECO:0000269" key="5">
    <source>
    </source>
</evidence>
<evidence type="ECO:0000269" key="6">
    <source>
    </source>
</evidence>
<evidence type="ECO:0000269" key="7">
    <source>
    </source>
</evidence>
<evidence type="ECO:0000269" key="8">
    <source>
    </source>
</evidence>
<evidence type="ECO:0000269" key="9">
    <source>
    </source>
</evidence>
<evidence type="ECO:0000269" key="10">
    <source>
    </source>
</evidence>
<evidence type="ECO:0000305" key="11"/>
<gene>
    <name type="primary">HN</name>
</gene>
<dbReference type="EC" id="3.2.1.18" evidence="1"/>
<dbReference type="EMBL" id="AF309418">
    <property type="protein sequence ID" value="AAG36979.1"/>
    <property type="molecule type" value="Genomic_RNA"/>
</dbReference>
<dbReference type="RefSeq" id="NP_071470.1">
    <property type="nucleotide sequence ID" value="NC_002617.1"/>
</dbReference>
<dbReference type="SMR" id="Q91UL0"/>
<dbReference type="CAZy" id="GH83">
    <property type="family name" value="Glycoside Hydrolase Family 83"/>
</dbReference>
<dbReference type="GlyCosmos" id="Q91UL0">
    <property type="glycosylation" value="4 sites, No reported glycans"/>
</dbReference>
<dbReference type="iPTMnet" id="Q91UL0"/>
<dbReference type="Proteomes" id="UP000002328">
    <property type="component" value="Segment"/>
</dbReference>
<dbReference type="GO" id="GO:0020002">
    <property type="term" value="C:host cell plasma membrane"/>
    <property type="evidence" value="ECO:0007669"/>
    <property type="project" value="UniProtKB-SubCell"/>
</dbReference>
<dbReference type="GO" id="GO:0016020">
    <property type="term" value="C:membrane"/>
    <property type="evidence" value="ECO:0007669"/>
    <property type="project" value="UniProtKB-KW"/>
</dbReference>
<dbReference type="GO" id="GO:0019031">
    <property type="term" value="C:viral envelope"/>
    <property type="evidence" value="ECO:0007669"/>
    <property type="project" value="UniProtKB-KW"/>
</dbReference>
<dbReference type="GO" id="GO:0055036">
    <property type="term" value="C:virion membrane"/>
    <property type="evidence" value="ECO:0007669"/>
    <property type="project" value="UniProtKB-SubCell"/>
</dbReference>
<dbReference type="GO" id="GO:0004308">
    <property type="term" value="F:exo-alpha-sialidase activity"/>
    <property type="evidence" value="ECO:0007669"/>
    <property type="project" value="UniProtKB-EC"/>
</dbReference>
<dbReference type="GO" id="GO:0046789">
    <property type="term" value="F:host cell surface receptor binding"/>
    <property type="evidence" value="ECO:0007669"/>
    <property type="project" value="InterPro"/>
</dbReference>
<dbReference type="GO" id="GO:0046718">
    <property type="term" value="P:symbiont entry into host cell"/>
    <property type="evidence" value="ECO:0007669"/>
    <property type="project" value="UniProtKB-KW"/>
</dbReference>
<dbReference type="GO" id="GO:0019062">
    <property type="term" value="P:virion attachment to host cell"/>
    <property type="evidence" value="ECO:0007669"/>
    <property type="project" value="UniProtKB-KW"/>
</dbReference>
<dbReference type="CDD" id="cd15469">
    <property type="entry name" value="HN"/>
    <property type="match status" value="1"/>
</dbReference>
<dbReference type="FunFam" id="2.120.10.10:FF:000004">
    <property type="entry name" value="Hemagglutinin-neuraminidase"/>
    <property type="match status" value="1"/>
</dbReference>
<dbReference type="Gene3D" id="2.120.10.10">
    <property type="match status" value="1"/>
</dbReference>
<dbReference type="InterPro" id="IPR016285">
    <property type="entry name" value="Hemagglutn-neuramid"/>
</dbReference>
<dbReference type="InterPro" id="IPR000665">
    <property type="entry name" value="Hemagglutn/HN"/>
</dbReference>
<dbReference type="InterPro" id="IPR036278">
    <property type="entry name" value="Sialidase_sf"/>
</dbReference>
<dbReference type="Pfam" id="PF00423">
    <property type="entry name" value="HN"/>
    <property type="match status" value="1"/>
</dbReference>
<dbReference type="PIRSF" id="PIRSF001072">
    <property type="entry name" value="Hemagglut-neuramid_paramyxoV"/>
    <property type="match status" value="1"/>
</dbReference>
<dbReference type="SUPFAM" id="SSF50939">
    <property type="entry name" value="Sialidases"/>
    <property type="match status" value="1"/>
</dbReference>